<proteinExistence type="inferred from homology"/>
<reference key="1">
    <citation type="journal article" date="2006" name="Genome Biol.">
        <title>Genomic analysis reveals that Pseudomonas aeruginosa virulence is combinatorial.</title>
        <authorList>
            <person name="Lee D.G."/>
            <person name="Urbach J.M."/>
            <person name="Wu G."/>
            <person name="Liberati N.T."/>
            <person name="Feinbaum R.L."/>
            <person name="Miyata S."/>
            <person name="Diggins L.T."/>
            <person name="He J."/>
            <person name="Saucier M."/>
            <person name="Deziel E."/>
            <person name="Friedman L."/>
            <person name="Li L."/>
            <person name="Grills G."/>
            <person name="Montgomery K."/>
            <person name="Kucherlapati R."/>
            <person name="Rahme L.G."/>
            <person name="Ausubel F.M."/>
        </authorList>
    </citation>
    <scope>NUCLEOTIDE SEQUENCE [LARGE SCALE GENOMIC DNA]</scope>
    <source>
        <strain>UCBPP-PA14</strain>
    </source>
</reference>
<evidence type="ECO:0000255" key="1">
    <source>
        <dbReference type="HAMAP-Rule" id="MF_00270"/>
    </source>
</evidence>
<evidence type="ECO:0000305" key="2"/>
<name>RS18_PSEAB</name>
<protein>
    <recommendedName>
        <fullName evidence="1">Small ribosomal subunit protein bS18</fullName>
    </recommendedName>
    <alternativeName>
        <fullName evidence="2">30S ribosomal protein S18</fullName>
    </alternativeName>
</protein>
<sequence>MARFFRRRKFCRFTAEGVKEIDYKDLNTLKAYVSETGKIVPSRITGTKAKYQRQLATAIKRARYLALLPYTDSHGR</sequence>
<comment type="function">
    <text evidence="1">Binds as a heterodimer with protein bS6 to the central domain of the 16S rRNA, where it helps stabilize the platform of the 30S subunit.</text>
</comment>
<comment type="subunit">
    <text evidence="1">Part of the 30S ribosomal subunit. Forms a tight heterodimer with protein bS6.</text>
</comment>
<comment type="similarity">
    <text evidence="1">Belongs to the bacterial ribosomal protein bS18 family.</text>
</comment>
<accession>Q02F84</accession>
<organism>
    <name type="scientific">Pseudomonas aeruginosa (strain UCBPP-PA14)</name>
    <dbReference type="NCBI Taxonomy" id="208963"/>
    <lineage>
        <taxon>Bacteria</taxon>
        <taxon>Pseudomonadati</taxon>
        <taxon>Pseudomonadota</taxon>
        <taxon>Gammaproteobacteria</taxon>
        <taxon>Pseudomonadales</taxon>
        <taxon>Pseudomonadaceae</taxon>
        <taxon>Pseudomonas</taxon>
    </lineage>
</organism>
<gene>
    <name evidence="1" type="primary">rpsR</name>
    <name type="ordered locus">PA14_65170</name>
</gene>
<dbReference type="EMBL" id="CP000438">
    <property type="protein sequence ID" value="ABJ14319.1"/>
    <property type="molecule type" value="Genomic_DNA"/>
</dbReference>
<dbReference type="RefSeq" id="WP_003095634.1">
    <property type="nucleotide sequence ID" value="NZ_CP034244.1"/>
</dbReference>
<dbReference type="SMR" id="Q02F84"/>
<dbReference type="GeneID" id="79910526"/>
<dbReference type="KEGG" id="pau:PA14_65170"/>
<dbReference type="PseudoCAP" id="PA14_65170"/>
<dbReference type="HOGENOM" id="CLU_148710_2_3_6"/>
<dbReference type="BioCyc" id="PAER208963:G1G74-5507-MONOMER"/>
<dbReference type="Proteomes" id="UP000000653">
    <property type="component" value="Chromosome"/>
</dbReference>
<dbReference type="GO" id="GO:0022627">
    <property type="term" value="C:cytosolic small ribosomal subunit"/>
    <property type="evidence" value="ECO:0007669"/>
    <property type="project" value="TreeGrafter"/>
</dbReference>
<dbReference type="GO" id="GO:0070181">
    <property type="term" value="F:small ribosomal subunit rRNA binding"/>
    <property type="evidence" value="ECO:0007669"/>
    <property type="project" value="TreeGrafter"/>
</dbReference>
<dbReference type="GO" id="GO:0003735">
    <property type="term" value="F:structural constituent of ribosome"/>
    <property type="evidence" value="ECO:0007669"/>
    <property type="project" value="InterPro"/>
</dbReference>
<dbReference type="GO" id="GO:0006412">
    <property type="term" value="P:translation"/>
    <property type="evidence" value="ECO:0007669"/>
    <property type="project" value="UniProtKB-UniRule"/>
</dbReference>
<dbReference type="FunFam" id="4.10.640.10:FF:000001">
    <property type="entry name" value="30S ribosomal protein S18"/>
    <property type="match status" value="1"/>
</dbReference>
<dbReference type="Gene3D" id="4.10.640.10">
    <property type="entry name" value="Ribosomal protein S18"/>
    <property type="match status" value="1"/>
</dbReference>
<dbReference type="HAMAP" id="MF_00270">
    <property type="entry name" value="Ribosomal_bS18"/>
    <property type="match status" value="1"/>
</dbReference>
<dbReference type="InterPro" id="IPR001648">
    <property type="entry name" value="Ribosomal_bS18"/>
</dbReference>
<dbReference type="InterPro" id="IPR018275">
    <property type="entry name" value="Ribosomal_bS18_CS"/>
</dbReference>
<dbReference type="InterPro" id="IPR036870">
    <property type="entry name" value="Ribosomal_bS18_sf"/>
</dbReference>
<dbReference type="NCBIfam" id="TIGR00165">
    <property type="entry name" value="S18"/>
    <property type="match status" value="1"/>
</dbReference>
<dbReference type="PANTHER" id="PTHR13479">
    <property type="entry name" value="30S RIBOSOMAL PROTEIN S18"/>
    <property type="match status" value="1"/>
</dbReference>
<dbReference type="PANTHER" id="PTHR13479:SF40">
    <property type="entry name" value="SMALL RIBOSOMAL SUBUNIT PROTEIN BS18M"/>
    <property type="match status" value="1"/>
</dbReference>
<dbReference type="Pfam" id="PF01084">
    <property type="entry name" value="Ribosomal_S18"/>
    <property type="match status" value="1"/>
</dbReference>
<dbReference type="PRINTS" id="PR00974">
    <property type="entry name" value="RIBOSOMALS18"/>
</dbReference>
<dbReference type="SUPFAM" id="SSF46911">
    <property type="entry name" value="Ribosomal protein S18"/>
    <property type="match status" value="1"/>
</dbReference>
<dbReference type="PROSITE" id="PS00057">
    <property type="entry name" value="RIBOSOMAL_S18"/>
    <property type="match status" value="1"/>
</dbReference>
<feature type="chain" id="PRO_1000003567" description="Small ribosomal subunit protein bS18">
    <location>
        <begin position="1"/>
        <end position="76"/>
    </location>
</feature>
<keyword id="KW-0687">Ribonucleoprotein</keyword>
<keyword id="KW-0689">Ribosomal protein</keyword>
<keyword id="KW-0694">RNA-binding</keyword>
<keyword id="KW-0699">rRNA-binding</keyword>